<name>SAHH_MYCBO</name>
<evidence type="ECO:0000255" key="1">
    <source>
        <dbReference type="HAMAP-Rule" id="MF_00563"/>
    </source>
</evidence>
<evidence type="ECO:0000269" key="2">
    <source ref="4"/>
</evidence>
<evidence type="ECO:0000305" key="3"/>
<keyword id="KW-0963">Cytoplasm</keyword>
<keyword id="KW-0903">Direct protein sequencing</keyword>
<keyword id="KW-0378">Hydrolase</keyword>
<keyword id="KW-0520">NAD</keyword>
<keyword id="KW-0554">One-carbon metabolism</keyword>
<keyword id="KW-1185">Reference proteome</keyword>
<dbReference type="EC" id="3.13.2.1" evidence="1"/>
<dbReference type="EMBL" id="AF262755">
    <property type="protein sequence ID" value="AAF72670.1"/>
    <property type="molecule type" value="Genomic_DNA"/>
</dbReference>
<dbReference type="EMBL" id="LT708304">
    <property type="protein sequence ID" value="SIU01905.1"/>
    <property type="molecule type" value="Genomic_DNA"/>
</dbReference>
<dbReference type="RefSeq" id="NP_856921.1">
    <property type="nucleotide sequence ID" value="NC_002945.3"/>
</dbReference>
<dbReference type="RefSeq" id="WP_010950857.1">
    <property type="nucleotide sequence ID" value="NC_002945.4"/>
</dbReference>
<dbReference type="SMR" id="Q7TWW7"/>
<dbReference type="KEGG" id="mbo:BQ2027_MB3276C"/>
<dbReference type="PATRIC" id="fig|233413.5.peg.3603"/>
<dbReference type="UniPathway" id="UPA00314">
    <property type="reaction ID" value="UER00076"/>
</dbReference>
<dbReference type="Proteomes" id="UP000001419">
    <property type="component" value="Chromosome"/>
</dbReference>
<dbReference type="GO" id="GO:0005829">
    <property type="term" value="C:cytosol"/>
    <property type="evidence" value="ECO:0007669"/>
    <property type="project" value="TreeGrafter"/>
</dbReference>
<dbReference type="GO" id="GO:0004013">
    <property type="term" value="F:adenosylhomocysteinase activity"/>
    <property type="evidence" value="ECO:0007669"/>
    <property type="project" value="UniProtKB-UniRule"/>
</dbReference>
<dbReference type="GO" id="GO:0071269">
    <property type="term" value="P:L-homocysteine biosynthetic process"/>
    <property type="evidence" value="ECO:0007669"/>
    <property type="project" value="UniProtKB-UniRule"/>
</dbReference>
<dbReference type="GO" id="GO:0006730">
    <property type="term" value="P:one-carbon metabolic process"/>
    <property type="evidence" value="ECO:0007669"/>
    <property type="project" value="UniProtKB-KW"/>
</dbReference>
<dbReference type="GO" id="GO:0033353">
    <property type="term" value="P:S-adenosylmethionine cycle"/>
    <property type="evidence" value="ECO:0007669"/>
    <property type="project" value="TreeGrafter"/>
</dbReference>
<dbReference type="CDD" id="cd00401">
    <property type="entry name" value="SAHH"/>
    <property type="match status" value="1"/>
</dbReference>
<dbReference type="FunFam" id="3.40.50.720:FF:000004">
    <property type="entry name" value="Adenosylhomocysteinase"/>
    <property type="match status" value="1"/>
</dbReference>
<dbReference type="Gene3D" id="3.40.50.1480">
    <property type="entry name" value="Adenosylhomocysteinase-like"/>
    <property type="match status" value="1"/>
</dbReference>
<dbReference type="Gene3D" id="3.40.50.720">
    <property type="entry name" value="NAD(P)-binding Rossmann-like Domain"/>
    <property type="match status" value="1"/>
</dbReference>
<dbReference type="HAMAP" id="MF_00563">
    <property type="entry name" value="AdoHcyase"/>
    <property type="match status" value="1"/>
</dbReference>
<dbReference type="InterPro" id="IPR042172">
    <property type="entry name" value="Adenosylhomocyst_ase-like_sf"/>
</dbReference>
<dbReference type="InterPro" id="IPR000043">
    <property type="entry name" value="Adenosylhomocysteinase-like"/>
</dbReference>
<dbReference type="InterPro" id="IPR015878">
    <property type="entry name" value="Ado_hCys_hydrolase_NAD-bd"/>
</dbReference>
<dbReference type="InterPro" id="IPR036291">
    <property type="entry name" value="NAD(P)-bd_dom_sf"/>
</dbReference>
<dbReference type="InterPro" id="IPR020082">
    <property type="entry name" value="S-Ado-L-homoCys_hydrolase_CS"/>
</dbReference>
<dbReference type="NCBIfam" id="TIGR00936">
    <property type="entry name" value="ahcY"/>
    <property type="match status" value="1"/>
</dbReference>
<dbReference type="NCBIfam" id="NF004005">
    <property type="entry name" value="PRK05476.2-3"/>
    <property type="match status" value="1"/>
</dbReference>
<dbReference type="PANTHER" id="PTHR23420">
    <property type="entry name" value="ADENOSYLHOMOCYSTEINASE"/>
    <property type="match status" value="1"/>
</dbReference>
<dbReference type="PANTHER" id="PTHR23420:SF0">
    <property type="entry name" value="ADENOSYLHOMOCYSTEINASE"/>
    <property type="match status" value="1"/>
</dbReference>
<dbReference type="Pfam" id="PF05221">
    <property type="entry name" value="AdoHcyase"/>
    <property type="match status" value="1"/>
</dbReference>
<dbReference type="Pfam" id="PF00670">
    <property type="entry name" value="AdoHcyase_NAD"/>
    <property type="match status" value="1"/>
</dbReference>
<dbReference type="PIRSF" id="PIRSF001109">
    <property type="entry name" value="Ad_hcy_hydrolase"/>
    <property type="match status" value="1"/>
</dbReference>
<dbReference type="SMART" id="SM00996">
    <property type="entry name" value="AdoHcyase"/>
    <property type="match status" value="1"/>
</dbReference>
<dbReference type="SMART" id="SM00997">
    <property type="entry name" value="AdoHcyase_NAD"/>
    <property type="match status" value="1"/>
</dbReference>
<dbReference type="SUPFAM" id="SSF52283">
    <property type="entry name" value="Formate/glycerate dehydrogenase catalytic domain-like"/>
    <property type="match status" value="1"/>
</dbReference>
<dbReference type="SUPFAM" id="SSF51735">
    <property type="entry name" value="NAD(P)-binding Rossmann-fold domains"/>
    <property type="match status" value="1"/>
</dbReference>
<dbReference type="PROSITE" id="PS00738">
    <property type="entry name" value="ADOHCYASE_1"/>
    <property type="match status" value="1"/>
</dbReference>
<dbReference type="PROSITE" id="PS00739">
    <property type="entry name" value="ADOHCYASE_2"/>
    <property type="match status" value="1"/>
</dbReference>
<protein>
    <recommendedName>
        <fullName evidence="1">Adenosylhomocysteinase</fullName>
        <ecNumber evidence="1">3.13.2.1</ecNumber>
    </recommendedName>
    <alternativeName>
        <fullName evidence="1">S-adenosyl-L-homocysteine hydrolase</fullName>
        <shortName evidence="1">AdoHcyase</shortName>
    </alternativeName>
</protein>
<feature type="initiator methionine" description="Removed" evidence="2">
    <location>
        <position position="1"/>
    </location>
</feature>
<feature type="chain" id="PRO_0000116969" description="Adenosylhomocysteinase">
    <location>
        <begin position="2"/>
        <end position="495"/>
    </location>
</feature>
<feature type="binding site" evidence="1">
    <location>
        <position position="71"/>
    </location>
    <ligand>
        <name>substrate</name>
    </ligand>
</feature>
<feature type="binding site" evidence="1">
    <location>
        <position position="156"/>
    </location>
    <ligand>
        <name>substrate</name>
    </ligand>
</feature>
<feature type="binding site" evidence="1">
    <location>
        <position position="218"/>
    </location>
    <ligand>
        <name>substrate</name>
    </ligand>
</feature>
<feature type="binding site" evidence="1">
    <location>
        <begin position="219"/>
        <end position="221"/>
    </location>
    <ligand>
        <name>NAD(+)</name>
        <dbReference type="ChEBI" id="CHEBI:57540"/>
    </ligand>
</feature>
<feature type="binding site" evidence="1">
    <location>
        <position position="248"/>
    </location>
    <ligand>
        <name>substrate</name>
    </ligand>
</feature>
<feature type="binding site" evidence="1">
    <location>
        <position position="252"/>
    </location>
    <ligand>
        <name>substrate</name>
    </ligand>
</feature>
<feature type="binding site" evidence="1">
    <location>
        <position position="253"/>
    </location>
    <ligand>
        <name>NAD(+)</name>
        <dbReference type="ChEBI" id="CHEBI:57540"/>
    </ligand>
</feature>
<feature type="binding site" evidence="1">
    <location>
        <begin position="282"/>
        <end position="287"/>
    </location>
    <ligand>
        <name>NAD(+)</name>
        <dbReference type="ChEBI" id="CHEBI:57540"/>
    </ligand>
</feature>
<feature type="binding site" evidence="1">
    <location>
        <position position="305"/>
    </location>
    <ligand>
        <name>NAD(+)</name>
        <dbReference type="ChEBI" id="CHEBI:57540"/>
    </ligand>
</feature>
<feature type="binding site" evidence="1">
    <location>
        <position position="340"/>
    </location>
    <ligand>
        <name>NAD(+)</name>
        <dbReference type="ChEBI" id="CHEBI:57540"/>
    </ligand>
</feature>
<feature type="binding site" evidence="1">
    <location>
        <begin position="361"/>
        <end position="363"/>
    </location>
    <ligand>
        <name>NAD(+)</name>
        <dbReference type="ChEBI" id="CHEBI:57540"/>
    </ligand>
</feature>
<feature type="binding site" evidence="1">
    <location>
        <position position="409"/>
    </location>
    <ligand>
        <name>NAD(+)</name>
        <dbReference type="ChEBI" id="CHEBI:57540"/>
    </ligand>
</feature>
<feature type="sequence conflict" description="In Ref. 1; AAF72670." evidence="3" ref="1">
    <original>I</original>
    <variation>V</variation>
    <location>
        <position position="189"/>
    </location>
</feature>
<accession>Q7TWW7</accession>
<accession>A0A1R3Y5D7</accession>
<accession>O08364</accession>
<accession>P81858</accession>
<accession>X2BN18</accession>
<proteinExistence type="evidence at protein level"/>
<sequence length="495" mass="54338">MTGNLVTKNSLTPDVRNGIDFKIADLSLADFGRKELRIAEHEMPGLMSLRREYAEVQPLKGARISGSLHMTVQTAVLIETLTALGAEVRWASCNIFSTQDHAAAAVVVGPHGTPDEPKGVPVFAWKGETLEEYWWAAEQMLTWPDPDKPANMILDDGGDATMLVLRGMQYEKAGVVPPAEEDDPAEWKIFLNLLRTRFETDKDKWTKIAESVKGVTEETTTGVLRLYQFAAAGDLAFPAINVNDSVTKSKFDNKYGTRHSLIDGINRGTDALIGGKKVLICGYGDVGKGCAEAMKGQGARVSVTEIDPINALQAMMEGFDVVTVEEAIGDADIVVTATGNKDIIMLEHIKAMKDHAILGNIGHFDNEIDMAGLERSGATRVNVKPQVDLWTFGDTGRSIIVLSEGRLLNLGNATGHPSFVMSNSFANQTIAQIELWTKNDEYDNEVYRLPKHLDEKVARIHVEALGGHLTKLTKEQAEYLGVDVEGPYKPDHYRY</sequence>
<comment type="function">
    <text evidence="1">May play a key role in the regulation of the intracellular concentration of adenosylhomocysteine.</text>
</comment>
<comment type="catalytic activity">
    <reaction evidence="1">
        <text>S-adenosyl-L-homocysteine + H2O = L-homocysteine + adenosine</text>
        <dbReference type="Rhea" id="RHEA:21708"/>
        <dbReference type="ChEBI" id="CHEBI:15377"/>
        <dbReference type="ChEBI" id="CHEBI:16335"/>
        <dbReference type="ChEBI" id="CHEBI:57856"/>
        <dbReference type="ChEBI" id="CHEBI:58199"/>
        <dbReference type="EC" id="3.13.2.1"/>
    </reaction>
</comment>
<comment type="cofactor">
    <cofactor>
        <name>NAD(+)</name>
        <dbReference type="ChEBI" id="CHEBI:57540"/>
    </cofactor>
    <text>Binds 1 NAD(+) per subunit.</text>
</comment>
<comment type="pathway">
    <text evidence="1">Amino-acid biosynthesis; L-homocysteine biosynthesis; L-homocysteine from S-adenosyl-L-homocysteine: step 1/1.</text>
</comment>
<comment type="subcellular location">
    <subcellularLocation>
        <location>Cytoplasm</location>
    </subcellularLocation>
</comment>
<comment type="similarity">
    <text evidence="1">Belongs to the adenosylhomocysteinase family.</text>
</comment>
<organism>
    <name type="scientific">Mycobacterium bovis (strain ATCC BAA-935 / AF2122/97)</name>
    <dbReference type="NCBI Taxonomy" id="233413"/>
    <lineage>
        <taxon>Bacteria</taxon>
        <taxon>Bacillati</taxon>
        <taxon>Actinomycetota</taxon>
        <taxon>Actinomycetes</taxon>
        <taxon>Mycobacteriales</taxon>
        <taxon>Mycobacteriaceae</taxon>
        <taxon>Mycobacterium</taxon>
        <taxon>Mycobacterium tuberculosis complex</taxon>
    </lineage>
</organism>
<reference key="1">
    <citation type="submission" date="2000-05" db="EMBL/GenBank/DDBJ databases">
        <title>Complete genomic DNA sequence of the S-adenosyl-L-homocysteine hydrolase gene from Mycobacterium bovis BCG.</title>
        <authorList>
            <person name="Pawar S.N."/>
            <person name="Nayak R."/>
        </authorList>
    </citation>
    <scope>NUCLEOTIDE SEQUENCE [GENOMIC DNA]</scope>
    <source>
        <strain>BCG / Pasteur</strain>
    </source>
</reference>
<reference key="2">
    <citation type="journal article" date="2003" name="Proc. Natl. Acad. Sci. U.S.A.">
        <title>The complete genome sequence of Mycobacterium bovis.</title>
        <authorList>
            <person name="Garnier T."/>
            <person name="Eiglmeier K."/>
            <person name="Camus J.-C."/>
            <person name="Medina N."/>
            <person name="Mansoor H."/>
            <person name="Pryor M."/>
            <person name="Duthoy S."/>
            <person name="Grondin S."/>
            <person name="Lacroix C."/>
            <person name="Monsempe C."/>
            <person name="Simon S."/>
            <person name="Harris B."/>
            <person name="Atkin R."/>
            <person name="Doggett J."/>
            <person name="Mayes R."/>
            <person name="Keating L."/>
            <person name="Wheeler P.R."/>
            <person name="Parkhill J."/>
            <person name="Barrell B.G."/>
            <person name="Cole S.T."/>
            <person name="Gordon S.V."/>
            <person name="Hewinson R.G."/>
        </authorList>
    </citation>
    <scope>NUCLEOTIDE SEQUENCE [LARGE SCALE GENOMIC DNA]</scope>
    <source>
        <strain>ATCC BAA-935 / AF2122/97</strain>
    </source>
</reference>
<reference key="3">
    <citation type="journal article" date="2017" name="Genome Announc.">
        <title>Updated reference genome sequence and annotation of Mycobacterium bovis AF2122/97.</title>
        <authorList>
            <person name="Malone K.M."/>
            <person name="Farrell D."/>
            <person name="Stuber T.P."/>
            <person name="Schubert O.T."/>
            <person name="Aebersold R."/>
            <person name="Robbe-Austerman S."/>
            <person name="Gordon S.V."/>
        </authorList>
    </citation>
    <scope>NUCLEOTIDE SEQUENCE [LARGE SCALE GENOMIC DNA]</scope>
    <scope>GENOME REANNOTATION</scope>
    <source>
        <strain>ATCC BAA-935 / AF2122/97</strain>
    </source>
</reference>
<reference key="4">
    <citation type="submission" date="1999-05" db="UniProtKB">
        <authorList>
            <person name="Pawar S.N."/>
            <person name="Balaji K.N."/>
            <person name="Jaffe H."/>
            <person name="Nayak R."/>
        </authorList>
    </citation>
    <scope>PROTEIN SEQUENCE OF 2-20 AND 226-246</scope>
    <source>
        <strain>BCG / Pasteur</strain>
    </source>
</reference>
<gene>
    <name evidence="1" type="primary">ahcY</name>
    <name type="synonym">sahH</name>
    <name type="ordered locus">BQ2027_MB3276C</name>
</gene>